<reference key="1">
    <citation type="journal article" date="2003" name="Lancet">
        <title>Genome sequence of Vibrio parahaemolyticus: a pathogenic mechanism distinct from that of V. cholerae.</title>
        <authorList>
            <person name="Makino K."/>
            <person name="Oshima K."/>
            <person name="Kurokawa K."/>
            <person name="Yokoyama K."/>
            <person name="Uda T."/>
            <person name="Tagomori K."/>
            <person name="Iijima Y."/>
            <person name="Najima M."/>
            <person name="Nakano M."/>
            <person name="Yamashita A."/>
            <person name="Kubota Y."/>
            <person name="Kimura S."/>
            <person name="Yasunaga T."/>
            <person name="Honda T."/>
            <person name="Shinagawa H."/>
            <person name="Hattori M."/>
            <person name="Iida T."/>
        </authorList>
    </citation>
    <scope>NUCLEOTIDE SEQUENCE [LARGE SCALE GENOMIC DNA]</scope>
    <source>
        <strain>RIMD 2210633</strain>
    </source>
</reference>
<evidence type="ECO:0000255" key="1">
    <source>
        <dbReference type="HAMAP-Rule" id="MF_00225"/>
    </source>
</evidence>
<feature type="chain" id="PRO_0000148486" description="Dihydroorotate dehydrogenase (quinone)">
    <location>
        <begin position="1"/>
        <end position="336"/>
    </location>
</feature>
<feature type="active site" description="Nucleophile" evidence="1">
    <location>
        <position position="175"/>
    </location>
</feature>
<feature type="binding site" evidence="1">
    <location>
        <begin position="62"/>
        <end position="66"/>
    </location>
    <ligand>
        <name>FMN</name>
        <dbReference type="ChEBI" id="CHEBI:58210"/>
    </ligand>
</feature>
<feature type="binding site" evidence="1">
    <location>
        <position position="66"/>
    </location>
    <ligand>
        <name>substrate</name>
    </ligand>
</feature>
<feature type="binding site" evidence="1">
    <location>
        <position position="86"/>
    </location>
    <ligand>
        <name>FMN</name>
        <dbReference type="ChEBI" id="CHEBI:58210"/>
    </ligand>
</feature>
<feature type="binding site" evidence="1">
    <location>
        <begin position="111"/>
        <end position="115"/>
    </location>
    <ligand>
        <name>substrate</name>
    </ligand>
</feature>
<feature type="binding site" evidence="1">
    <location>
        <position position="139"/>
    </location>
    <ligand>
        <name>FMN</name>
        <dbReference type="ChEBI" id="CHEBI:58210"/>
    </ligand>
</feature>
<feature type="binding site" evidence="1">
    <location>
        <position position="172"/>
    </location>
    <ligand>
        <name>FMN</name>
        <dbReference type="ChEBI" id="CHEBI:58210"/>
    </ligand>
</feature>
<feature type="binding site" evidence="1">
    <location>
        <position position="172"/>
    </location>
    <ligand>
        <name>substrate</name>
    </ligand>
</feature>
<feature type="binding site" evidence="1">
    <location>
        <position position="177"/>
    </location>
    <ligand>
        <name>substrate</name>
    </ligand>
</feature>
<feature type="binding site" evidence="1">
    <location>
        <position position="217"/>
    </location>
    <ligand>
        <name>FMN</name>
        <dbReference type="ChEBI" id="CHEBI:58210"/>
    </ligand>
</feature>
<feature type="binding site" evidence="1">
    <location>
        <position position="245"/>
    </location>
    <ligand>
        <name>FMN</name>
        <dbReference type="ChEBI" id="CHEBI:58210"/>
    </ligand>
</feature>
<feature type="binding site" evidence="1">
    <location>
        <begin position="246"/>
        <end position="247"/>
    </location>
    <ligand>
        <name>substrate</name>
    </ligand>
</feature>
<feature type="binding site" evidence="1">
    <location>
        <position position="268"/>
    </location>
    <ligand>
        <name>FMN</name>
        <dbReference type="ChEBI" id="CHEBI:58210"/>
    </ligand>
</feature>
<feature type="binding site" evidence="1">
    <location>
        <position position="297"/>
    </location>
    <ligand>
        <name>FMN</name>
        <dbReference type="ChEBI" id="CHEBI:58210"/>
    </ligand>
</feature>
<feature type="binding site" evidence="1">
    <location>
        <begin position="318"/>
        <end position="319"/>
    </location>
    <ligand>
        <name>FMN</name>
        <dbReference type="ChEBI" id="CHEBI:58210"/>
    </ligand>
</feature>
<accession>Q87PB7</accession>
<dbReference type="EC" id="1.3.5.2" evidence="1"/>
<dbReference type="EMBL" id="BA000031">
    <property type="protein sequence ID" value="BAC59863.1"/>
    <property type="molecule type" value="Genomic_DNA"/>
</dbReference>
<dbReference type="RefSeq" id="NP_797979.1">
    <property type="nucleotide sequence ID" value="NC_004603.1"/>
</dbReference>
<dbReference type="RefSeq" id="WP_005458264.1">
    <property type="nucleotide sequence ID" value="NC_004603.1"/>
</dbReference>
<dbReference type="SMR" id="Q87PB7"/>
<dbReference type="GeneID" id="1189107"/>
<dbReference type="KEGG" id="vpa:VP1601"/>
<dbReference type="PATRIC" id="fig|223926.6.peg.1524"/>
<dbReference type="eggNOG" id="COG0167">
    <property type="taxonomic scope" value="Bacteria"/>
</dbReference>
<dbReference type="HOGENOM" id="CLU_013640_2_0_6"/>
<dbReference type="UniPathway" id="UPA00070">
    <property type="reaction ID" value="UER00946"/>
</dbReference>
<dbReference type="Proteomes" id="UP000002493">
    <property type="component" value="Chromosome 1"/>
</dbReference>
<dbReference type="GO" id="GO:0005737">
    <property type="term" value="C:cytoplasm"/>
    <property type="evidence" value="ECO:0007669"/>
    <property type="project" value="InterPro"/>
</dbReference>
<dbReference type="GO" id="GO:0005886">
    <property type="term" value="C:plasma membrane"/>
    <property type="evidence" value="ECO:0007669"/>
    <property type="project" value="UniProtKB-SubCell"/>
</dbReference>
<dbReference type="GO" id="GO:0106430">
    <property type="term" value="F:dihydroorotate dehydrogenase (quinone) activity"/>
    <property type="evidence" value="ECO:0007669"/>
    <property type="project" value="UniProtKB-EC"/>
</dbReference>
<dbReference type="GO" id="GO:0006207">
    <property type="term" value="P:'de novo' pyrimidine nucleobase biosynthetic process"/>
    <property type="evidence" value="ECO:0007669"/>
    <property type="project" value="InterPro"/>
</dbReference>
<dbReference type="GO" id="GO:0044205">
    <property type="term" value="P:'de novo' UMP biosynthetic process"/>
    <property type="evidence" value="ECO:0007669"/>
    <property type="project" value="UniProtKB-UniRule"/>
</dbReference>
<dbReference type="CDD" id="cd04738">
    <property type="entry name" value="DHOD_2_like"/>
    <property type="match status" value="1"/>
</dbReference>
<dbReference type="FunFam" id="3.20.20.70:FF:000028">
    <property type="entry name" value="Dihydroorotate dehydrogenase (quinone)"/>
    <property type="match status" value="1"/>
</dbReference>
<dbReference type="Gene3D" id="3.20.20.70">
    <property type="entry name" value="Aldolase class I"/>
    <property type="match status" value="1"/>
</dbReference>
<dbReference type="HAMAP" id="MF_00225">
    <property type="entry name" value="DHO_dh_type2"/>
    <property type="match status" value="1"/>
</dbReference>
<dbReference type="InterPro" id="IPR013785">
    <property type="entry name" value="Aldolase_TIM"/>
</dbReference>
<dbReference type="InterPro" id="IPR050074">
    <property type="entry name" value="DHO_dehydrogenase"/>
</dbReference>
<dbReference type="InterPro" id="IPR012135">
    <property type="entry name" value="Dihydroorotate_DH_1_2"/>
</dbReference>
<dbReference type="InterPro" id="IPR005719">
    <property type="entry name" value="Dihydroorotate_DH_2"/>
</dbReference>
<dbReference type="InterPro" id="IPR005720">
    <property type="entry name" value="Dihydroorotate_DH_cat"/>
</dbReference>
<dbReference type="InterPro" id="IPR001295">
    <property type="entry name" value="Dihydroorotate_DH_CS"/>
</dbReference>
<dbReference type="NCBIfam" id="NF003644">
    <property type="entry name" value="PRK05286.1-1"/>
    <property type="match status" value="1"/>
</dbReference>
<dbReference type="NCBIfam" id="NF003645">
    <property type="entry name" value="PRK05286.1-2"/>
    <property type="match status" value="1"/>
</dbReference>
<dbReference type="NCBIfam" id="NF003646">
    <property type="entry name" value="PRK05286.1-4"/>
    <property type="match status" value="1"/>
</dbReference>
<dbReference type="NCBIfam" id="NF003652">
    <property type="entry name" value="PRK05286.2-5"/>
    <property type="match status" value="1"/>
</dbReference>
<dbReference type="NCBIfam" id="TIGR01036">
    <property type="entry name" value="pyrD_sub2"/>
    <property type="match status" value="1"/>
</dbReference>
<dbReference type="PANTHER" id="PTHR48109:SF4">
    <property type="entry name" value="DIHYDROOROTATE DEHYDROGENASE (QUINONE), MITOCHONDRIAL"/>
    <property type="match status" value="1"/>
</dbReference>
<dbReference type="PANTHER" id="PTHR48109">
    <property type="entry name" value="DIHYDROOROTATE DEHYDROGENASE (QUINONE), MITOCHONDRIAL-RELATED"/>
    <property type="match status" value="1"/>
</dbReference>
<dbReference type="Pfam" id="PF01180">
    <property type="entry name" value="DHO_dh"/>
    <property type="match status" value="1"/>
</dbReference>
<dbReference type="PIRSF" id="PIRSF000164">
    <property type="entry name" value="DHO_oxidase"/>
    <property type="match status" value="1"/>
</dbReference>
<dbReference type="SUPFAM" id="SSF51395">
    <property type="entry name" value="FMN-linked oxidoreductases"/>
    <property type="match status" value="1"/>
</dbReference>
<dbReference type="PROSITE" id="PS00911">
    <property type="entry name" value="DHODEHASE_1"/>
    <property type="match status" value="1"/>
</dbReference>
<dbReference type="PROSITE" id="PS00912">
    <property type="entry name" value="DHODEHASE_2"/>
    <property type="match status" value="1"/>
</dbReference>
<organism>
    <name type="scientific">Vibrio parahaemolyticus serotype O3:K6 (strain RIMD 2210633)</name>
    <dbReference type="NCBI Taxonomy" id="223926"/>
    <lineage>
        <taxon>Bacteria</taxon>
        <taxon>Pseudomonadati</taxon>
        <taxon>Pseudomonadota</taxon>
        <taxon>Gammaproteobacteria</taxon>
        <taxon>Vibrionales</taxon>
        <taxon>Vibrionaceae</taxon>
        <taxon>Vibrio</taxon>
    </lineage>
</organism>
<name>PYRD_VIBPA</name>
<sequence>MLYRLARTGFFQLDAEKAHDLAIKNFQRFNGTPLDLFYRQQLPNRPVECMGLTFRNPVGLAAGLDKNGECIEAFDAMGFGFVEVGTVTPRPQPGNDKPRLFRLVEAEGIINRMGFNNLGVDHLVENVKKAKFNCVLGINIGKNKDTPIENGAEDYLICMEKVYEYAGYIAVNISSPNTPGLRSLQYGEALDELLSELKAKQSELAEKHGKYVPLALKIAPDLSDDEITQICESLLKNNIDGVIATNTTLDRTVVEGMKHANEAGGLSGRPVQSRSTEVVRKLHEALGDKLPIIGVGGIDSYVAAKEKMMAGAQLVQVYTGFIYHGPGLVRDIVKNL</sequence>
<comment type="function">
    <text evidence="1">Catalyzes the conversion of dihydroorotate to orotate with quinone as electron acceptor.</text>
</comment>
<comment type="catalytic activity">
    <reaction evidence="1">
        <text>(S)-dihydroorotate + a quinone = orotate + a quinol</text>
        <dbReference type="Rhea" id="RHEA:30187"/>
        <dbReference type="ChEBI" id="CHEBI:24646"/>
        <dbReference type="ChEBI" id="CHEBI:30839"/>
        <dbReference type="ChEBI" id="CHEBI:30864"/>
        <dbReference type="ChEBI" id="CHEBI:132124"/>
        <dbReference type="EC" id="1.3.5.2"/>
    </reaction>
</comment>
<comment type="cofactor">
    <cofactor evidence="1">
        <name>FMN</name>
        <dbReference type="ChEBI" id="CHEBI:58210"/>
    </cofactor>
    <text evidence="1">Binds 1 FMN per subunit.</text>
</comment>
<comment type="pathway">
    <text evidence="1">Pyrimidine metabolism; UMP biosynthesis via de novo pathway; orotate from (S)-dihydroorotate (quinone route): step 1/1.</text>
</comment>
<comment type="subunit">
    <text evidence="1">Monomer.</text>
</comment>
<comment type="subcellular location">
    <subcellularLocation>
        <location evidence="1">Cell membrane</location>
        <topology evidence="1">Peripheral membrane protein</topology>
    </subcellularLocation>
</comment>
<comment type="similarity">
    <text evidence="1">Belongs to the dihydroorotate dehydrogenase family. Type 2 subfamily.</text>
</comment>
<gene>
    <name evidence="1" type="primary">pyrD</name>
    <name type="ordered locus">VP1601</name>
</gene>
<proteinExistence type="inferred from homology"/>
<protein>
    <recommendedName>
        <fullName evidence="1">Dihydroorotate dehydrogenase (quinone)</fullName>
        <ecNumber evidence="1">1.3.5.2</ecNumber>
    </recommendedName>
    <alternativeName>
        <fullName evidence="1">DHOdehase</fullName>
        <shortName evidence="1">DHOD</shortName>
        <shortName evidence="1">DHODase</shortName>
    </alternativeName>
    <alternativeName>
        <fullName evidence="1">Dihydroorotate oxidase</fullName>
    </alternativeName>
</protein>
<keyword id="KW-1003">Cell membrane</keyword>
<keyword id="KW-0285">Flavoprotein</keyword>
<keyword id="KW-0288">FMN</keyword>
<keyword id="KW-0472">Membrane</keyword>
<keyword id="KW-0560">Oxidoreductase</keyword>
<keyword id="KW-0665">Pyrimidine biosynthesis</keyword>